<comment type="function">
    <text evidence="1">Catalyzes the oxidation of L-aspartate to iminoaspartate, the first step in the de novo biosynthesis of NAD(+).</text>
</comment>
<comment type="catalytic activity">
    <reaction evidence="1">
        <text>L-aspartate + O2 = iminosuccinate + H2O2</text>
        <dbReference type="Rhea" id="RHEA:25876"/>
        <dbReference type="ChEBI" id="CHEBI:15379"/>
        <dbReference type="ChEBI" id="CHEBI:16240"/>
        <dbReference type="ChEBI" id="CHEBI:29991"/>
        <dbReference type="ChEBI" id="CHEBI:77875"/>
        <dbReference type="EC" id="1.4.3.16"/>
    </reaction>
    <physiologicalReaction direction="left-to-right" evidence="1">
        <dbReference type="Rhea" id="RHEA:25877"/>
    </physiologicalReaction>
</comment>
<comment type="cofactor">
    <cofactor evidence="1">
        <name>FAD</name>
        <dbReference type="ChEBI" id="CHEBI:57692"/>
    </cofactor>
    <text evidence="1">Binds 1 FAD per subunit.</text>
</comment>
<comment type="pathway">
    <text evidence="1">Cofactor biosynthesis; NAD(+) biosynthesis; iminoaspartate from L-aspartate (oxidase route): step 1/1.</text>
</comment>
<comment type="subcellular location">
    <subcellularLocation>
        <location evidence="1">Cytoplasm</location>
    </subcellularLocation>
</comment>
<comment type="similarity">
    <text evidence="2">Belongs to the FAD-dependent oxidoreductase 2 family. NadB subfamily.</text>
</comment>
<organism>
    <name type="scientific">Pyrococcus abyssi (strain GE5 / Orsay)</name>
    <dbReference type="NCBI Taxonomy" id="272844"/>
    <lineage>
        <taxon>Archaea</taxon>
        <taxon>Methanobacteriati</taxon>
        <taxon>Methanobacteriota</taxon>
        <taxon>Thermococci</taxon>
        <taxon>Thermococcales</taxon>
        <taxon>Thermococcaceae</taxon>
        <taxon>Pyrococcus</taxon>
    </lineage>
</organism>
<reference key="1">
    <citation type="journal article" date="2003" name="Mol. Microbiol.">
        <title>An integrated analysis of the genome of the hyperthermophilic archaeon Pyrococcus abyssi.</title>
        <authorList>
            <person name="Cohen G.N."/>
            <person name="Barbe V."/>
            <person name="Flament D."/>
            <person name="Galperin M."/>
            <person name="Heilig R."/>
            <person name="Lecompte O."/>
            <person name="Poch O."/>
            <person name="Prieur D."/>
            <person name="Querellou J."/>
            <person name="Ripp R."/>
            <person name="Thierry J.-C."/>
            <person name="Van der Oost J."/>
            <person name="Weissenbach J."/>
            <person name="Zivanovic Y."/>
            <person name="Forterre P."/>
        </authorList>
    </citation>
    <scope>NUCLEOTIDE SEQUENCE [LARGE SCALE GENOMIC DNA]</scope>
    <source>
        <strain>GE5 / Orsay</strain>
    </source>
</reference>
<reference key="2">
    <citation type="journal article" date="2012" name="Curr. Microbiol.">
        <title>Re-annotation of two hyperthermophilic archaea Pyrococcus abyssi GE5 and Pyrococcus furiosus DSM 3638.</title>
        <authorList>
            <person name="Gao J."/>
            <person name="Wang J."/>
        </authorList>
    </citation>
    <scope>GENOME REANNOTATION</scope>
    <source>
        <strain>GE5 / Orsay</strain>
    </source>
</reference>
<name>NADB_PYRAB</name>
<sequence length="464" mass="50939">MIDMEVGIVGGGLAGLVAAISLVEKGVDVSIIGPKSKDSNSYLAQAGIAFPLVEGDSIRIHVLDTIRAGKYINDEEVVWNVISKSTEAYSFLVSHGVTFTGNELEGGHSHPRVFTIKSETGKHVIPILEKHARELGVNFVRGFVEEIGIKNGKLAGVFLNGELLKFDAVVVATGGFSGLYRFTAGVKENIGLLIGDLALKGVPLRDMEFVQFHPTGFIGRRTYLITEAVRGAGAKLVTGDGERFVNELETRDVVARAIYLKMLEGKGVFLDARGIEDFKDRFPYVYSVLKKEGIDPGKDLIPVTPVAHYTMGGISVDIFYRTRIRGLYAIGEAASNGFHGANRLASNSLLECVVSGLEVARTILREEPKRGANDAPYNFDELGDVDSIREIMWNHAGIVRDKSSLLEGLKKLEGVEADQRLKVVAKAVLTLALEREESRGSHYRRDFPFMRKEFERPSFFHLNV</sequence>
<feature type="chain" id="PRO_0000184408" description="L-aspartate oxidase">
    <location>
        <begin position="1"/>
        <end position="464"/>
    </location>
</feature>
<feature type="active site" description="Proton donor/acceptor" evidence="1">
    <location>
        <position position="251"/>
    </location>
</feature>
<feature type="binding site" evidence="1">
    <location>
        <begin position="11"/>
        <end position="14"/>
    </location>
    <ligand>
        <name>FAD</name>
        <dbReference type="ChEBI" id="CHEBI:57692"/>
    </ligand>
</feature>
<feature type="binding site" evidence="1">
    <location>
        <begin position="40"/>
        <end position="47"/>
    </location>
    <ligand>
        <name>FAD</name>
        <dbReference type="ChEBI" id="CHEBI:57692"/>
    </ligand>
</feature>
<feature type="binding site" evidence="1">
    <location>
        <position position="332"/>
    </location>
    <ligand>
        <name>FAD</name>
        <dbReference type="ChEBI" id="CHEBI:57692"/>
    </ligand>
</feature>
<feature type="binding site" evidence="1">
    <location>
        <begin position="348"/>
        <end position="349"/>
    </location>
    <ligand>
        <name>FAD</name>
        <dbReference type="ChEBI" id="CHEBI:57692"/>
    </ligand>
</feature>
<feature type="site" description="Important in orienting the L-aspartate substrate" evidence="1">
    <location>
        <position position="105"/>
    </location>
</feature>
<proteinExistence type="inferred from homology"/>
<accession>Q9V2R0</accession>
<accession>G8ZFJ2</accession>
<protein>
    <recommendedName>
        <fullName evidence="1">L-aspartate oxidase</fullName>
        <shortName evidence="1">LASPO</shortName>
        <ecNumber evidence="1">1.4.3.16</ecNumber>
    </recommendedName>
    <alternativeName>
        <fullName>Quinolinate synthase B</fullName>
    </alternativeName>
</protein>
<gene>
    <name type="primary">nadB</name>
    <name type="ordered locus">PYRAB00150</name>
    <name type="ORF">PAB2343</name>
</gene>
<keyword id="KW-0963">Cytoplasm</keyword>
<keyword id="KW-0274">FAD</keyword>
<keyword id="KW-0285">Flavoprotein</keyword>
<keyword id="KW-0547">Nucleotide-binding</keyword>
<keyword id="KW-0560">Oxidoreductase</keyword>
<keyword id="KW-0662">Pyridine nucleotide biosynthesis</keyword>
<evidence type="ECO:0000250" key="1">
    <source>
        <dbReference type="UniProtKB" id="P10902"/>
    </source>
</evidence>
<evidence type="ECO:0000305" key="2"/>
<dbReference type="EC" id="1.4.3.16" evidence="1"/>
<dbReference type="EMBL" id="AJ248283">
    <property type="protein sequence ID" value="CAB48938.1"/>
    <property type="molecule type" value="Genomic_DNA"/>
</dbReference>
<dbReference type="EMBL" id="HE613800">
    <property type="protein sequence ID" value="CCE69383.1"/>
    <property type="molecule type" value="Genomic_DNA"/>
</dbReference>
<dbReference type="PIR" id="C75186">
    <property type="entry name" value="C75186"/>
</dbReference>
<dbReference type="SMR" id="Q9V2R0"/>
<dbReference type="STRING" id="272844.PAB2343"/>
<dbReference type="KEGG" id="pab:PAB2343"/>
<dbReference type="PATRIC" id="fig|272844.11.peg.17"/>
<dbReference type="eggNOG" id="arCOG00572">
    <property type="taxonomic scope" value="Archaea"/>
</dbReference>
<dbReference type="HOGENOM" id="CLU_014312_3_2_2"/>
<dbReference type="PhylomeDB" id="Q9V2R0"/>
<dbReference type="UniPathway" id="UPA00253">
    <property type="reaction ID" value="UER00326"/>
</dbReference>
<dbReference type="Proteomes" id="UP000000810">
    <property type="component" value="Chromosome"/>
</dbReference>
<dbReference type="Proteomes" id="UP000009139">
    <property type="component" value="Chromosome"/>
</dbReference>
<dbReference type="GO" id="GO:0005737">
    <property type="term" value="C:cytoplasm"/>
    <property type="evidence" value="ECO:0007669"/>
    <property type="project" value="UniProtKB-SubCell"/>
</dbReference>
<dbReference type="GO" id="GO:0008734">
    <property type="term" value="F:L-aspartate oxidase activity"/>
    <property type="evidence" value="ECO:0007669"/>
    <property type="project" value="UniProtKB-EC"/>
</dbReference>
<dbReference type="GO" id="GO:0000166">
    <property type="term" value="F:nucleotide binding"/>
    <property type="evidence" value="ECO:0007669"/>
    <property type="project" value="UniProtKB-KW"/>
</dbReference>
<dbReference type="GO" id="GO:0009435">
    <property type="term" value="P:NAD biosynthetic process"/>
    <property type="evidence" value="ECO:0007669"/>
    <property type="project" value="UniProtKB-UniPathway"/>
</dbReference>
<dbReference type="Gene3D" id="3.50.50.60">
    <property type="entry name" value="FAD/NAD(P)-binding domain"/>
    <property type="match status" value="1"/>
</dbReference>
<dbReference type="Gene3D" id="1.20.58.100">
    <property type="entry name" value="Fumarate reductase/succinate dehydrogenase flavoprotein-like, C-terminal domain"/>
    <property type="match status" value="1"/>
</dbReference>
<dbReference type="Gene3D" id="3.90.700.10">
    <property type="entry name" value="Succinate dehydrogenase/fumarate reductase flavoprotein, catalytic domain"/>
    <property type="match status" value="1"/>
</dbReference>
<dbReference type="InterPro" id="IPR003953">
    <property type="entry name" value="FAD-dep_OxRdtase_2_FAD-bd"/>
</dbReference>
<dbReference type="InterPro" id="IPR036188">
    <property type="entry name" value="FAD/NAD-bd_sf"/>
</dbReference>
<dbReference type="InterPro" id="IPR037099">
    <property type="entry name" value="Fum_R/Succ_DH_flav-like_C_sf"/>
</dbReference>
<dbReference type="InterPro" id="IPR015939">
    <property type="entry name" value="Fum_Rdtase/Succ_DH_flav-like_C"/>
</dbReference>
<dbReference type="InterPro" id="IPR005288">
    <property type="entry name" value="NadB"/>
</dbReference>
<dbReference type="InterPro" id="IPR027477">
    <property type="entry name" value="Succ_DH/fumarate_Rdtase_cat_sf"/>
</dbReference>
<dbReference type="NCBIfam" id="TIGR00551">
    <property type="entry name" value="nadB"/>
    <property type="match status" value="1"/>
</dbReference>
<dbReference type="NCBIfam" id="NF006254">
    <property type="entry name" value="PRK08401.1"/>
    <property type="match status" value="1"/>
</dbReference>
<dbReference type="PANTHER" id="PTHR42716">
    <property type="entry name" value="L-ASPARTATE OXIDASE"/>
    <property type="match status" value="1"/>
</dbReference>
<dbReference type="PANTHER" id="PTHR42716:SF2">
    <property type="entry name" value="L-ASPARTATE OXIDASE, CHLOROPLASTIC"/>
    <property type="match status" value="1"/>
</dbReference>
<dbReference type="Pfam" id="PF00890">
    <property type="entry name" value="FAD_binding_2"/>
    <property type="match status" value="1"/>
</dbReference>
<dbReference type="Pfam" id="PF02910">
    <property type="entry name" value="Succ_DH_flav_C"/>
    <property type="match status" value="1"/>
</dbReference>
<dbReference type="PRINTS" id="PR00368">
    <property type="entry name" value="FADPNR"/>
</dbReference>
<dbReference type="PRINTS" id="PR00411">
    <property type="entry name" value="PNDRDTASEI"/>
</dbReference>
<dbReference type="SUPFAM" id="SSF51905">
    <property type="entry name" value="FAD/NAD(P)-binding domain"/>
    <property type="match status" value="1"/>
</dbReference>
<dbReference type="SUPFAM" id="SSF46977">
    <property type="entry name" value="Succinate dehydrogenase/fumarate reductase flavoprotein C-terminal domain"/>
    <property type="match status" value="1"/>
</dbReference>
<dbReference type="SUPFAM" id="SSF56425">
    <property type="entry name" value="Succinate dehydrogenase/fumarate reductase flavoprotein, catalytic domain"/>
    <property type="match status" value="1"/>
</dbReference>